<name>ERA_MYCTA</name>
<proteinExistence type="evidence at protein level"/>
<gene>
    <name evidence="1 4" type="primary">era</name>
    <name type="ordered locus">MRA_2388</name>
</gene>
<comment type="function">
    <text evidence="1 3">Exhibits GTPase activity (By similarity). Binds RNA but is probably not involved in ribosome assembly in mycobacteria (PubMed:35917161).</text>
</comment>
<comment type="subunit">
    <text evidence="1 3">Monomer (By similarity). Interacts with several envelope proteins (PubMed:35917161).</text>
</comment>
<comment type="subcellular location">
    <subcellularLocation>
        <location evidence="1 3">Cell envelope</location>
    </subcellularLocation>
    <subcellularLocation>
        <location evidence="1 3">Secreted</location>
        <location evidence="1 3">Cell wall</location>
    </subcellularLocation>
</comment>
<comment type="disruption phenotype">
    <text evidence="3">Depletion of Era does not affect bacterial growth, assembly of ribosomes, profile of newly synthesized proteins or the susceptibility of bacteria to protein synthesis inhibitors.</text>
</comment>
<comment type="similarity">
    <text evidence="1">Belongs to the TRAFAC class TrmE-Era-EngA-EngB-Septin-like GTPase superfamily. Era GTPase family.</text>
</comment>
<keyword id="KW-0134">Cell wall</keyword>
<keyword id="KW-0342">GTP-binding</keyword>
<keyword id="KW-0547">Nucleotide-binding</keyword>
<keyword id="KW-1185">Reference proteome</keyword>
<keyword id="KW-0694">RNA-binding</keyword>
<keyword id="KW-0964">Secreted</keyword>
<organism>
    <name type="scientific">Mycobacterium tuberculosis (strain ATCC 25177 / H37Ra)</name>
    <dbReference type="NCBI Taxonomy" id="419947"/>
    <lineage>
        <taxon>Bacteria</taxon>
        <taxon>Bacillati</taxon>
        <taxon>Actinomycetota</taxon>
        <taxon>Actinomycetes</taxon>
        <taxon>Mycobacteriales</taxon>
        <taxon>Mycobacteriaceae</taxon>
        <taxon>Mycobacterium</taxon>
        <taxon>Mycobacterium tuberculosis complex</taxon>
    </lineage>
</organism>
<feature type="chain" id="PRO_1000079715" description="GTPase Era">
    <location>
        <begin position="1"/>
        <end position="300"/>
    </location>
</feature>
<feature type="domain" description="Era-type G" evidence="2">
    <location>
        <begin position="5"/>
        <end position="176"/>
    </location>
</feature>
<feature type="domain" description="KH type-2" evidence="1">
    <location>
        <begin position="207"/>
        <end position="286"/>
    </location>
</feature>
<feature type="region of interest" description="G1" evidence="2">
    <location>
        <begin position="13"/>
        <end position="20"/>
    </location>
</feature>
<feature type="region of interest" description="G2" evidence="2">
    <location>
        <begin position="39"/>
        <end position="43"/>
    </location>
</feature>
<feature type="region of interest" description="G3" evidence="2">
    <location>
        <begin position="60"/>
        <end position="63"/>
    </location>
</feature>
<feature type="region of interest" description="G4" evidence="2">
    <location>
        <begin position="125"/>
        <end position="128"/>
    </location>
</feature>
<feature type="region of interest" description="G5" evidence="2">
    <location>
        <begin position="155"/>
        <end position="157"/>
    </location>
</feature>
<feature type="binding site" evidence="1">
    <location>
        <begin position="13"/>
        <end position="20"/>
    </location>
    <ligand>
        <name>GTP</name>
        <dbReference type="ChEBI" id="CHEBI:37565"/>
    </ligand>
</feature>
<feature type="binding site" evidence="1">
    <location>
        <begin position="60"/>
        <end position="64"/>
    </location>
    <ligand>
        <name>GTP</name>
        <dbReference type="ChEBI" id="CHEBI:37565"/>
    </ligand>
</feature>
<feature type="binding site" evidence="1">
    <location>
        <begin position="125"/>
        <end position="128"/>
    </location>
    <ligand>
        <name>GTP</name>
        <dbReference type="ChEBI" id="CHEBI:37565"/>
    </ligand>
</feature>
<evidence type="ECO:0000255" key="1">
    <source>
        <dbReference type="HAMAP-Rule" id="MF_00367"/>
    </source>
</evidence>
<evidence type="ECO:0000255" key="2">
    <source>
        <dbReference type="PROSITE-ProRule" id="PRU01050"/>
    </source>
</evidence>
<evidence type="ECO:0000269" key="3">
    <source>
    </source>
</evidence>
<evidence type="ECO:0000303" key="4">
    <source>
    </source>
</evidence>
<evidence type="ECO:0000305" key="5"/>
<dbReference type="EMBL" id="CP000611">
    <property type="protein sequence ID" value="ABQ74157.1"/>
    <property type="molecule type" value="Genomic_DNA"/>
</dbReference>
<dbReference type="RefSeq" id="WP_003412224.1">
    <property type="nucleotide sequence ID" value="NZ_CP016972.1"/>
</dbReference>
<dbReference type="SMR" id="A5U557"/>
<dbReference type="GeneID" id="45426351"/>
<dbReference type="KEGG" id="mra:MRA_2388"/>
<dbReference type="eggNOG" id="COG1159">
    <property type="taxonomic scope" value="Bacteria"/>
</dbReference>
<dbReference type="HOGENOM" id="CLU_038009_0_2_11"/>
<dbReference type="Proteomes" id="UP000001988">
    <property type="component" value="Chromosome"/>
</dbReference>
<dbReference type="GO" id="GO:0030313">
    <property type="term" value="C:cell envelope"/>
    <property type="evidence" value="ECO:0007669"/>
    <property type="project" value="UniProtKB-SubCell"/>
</dbReference>
<dbReference type="GO" id="GO:0005829">
    <property type="term" value="C:cytosol"/>
    <property type="evidence" value="ECO:0007669"/>
    <property type="project" value="TreeGrafter"/>
</dbReference>
<dbReference type="GO" id="GO:0005576">
    <property type="term" value="C:extracellular region"/>
    <property type="evidence" value="ECO:0007669"/>
    <property type="project" value="UniProtKB-KW"/>
</dbReference>
<dbReference type="GO" id="GO:0005525">
    <property type="term" value="F:GTP binding"/>
    <property type="evidence" value="ECO:0007669"/>
    <property type="project" value="UniProtKB-UniRule"/>
</dbReference>
<dbReference type="GO" id="GO:0003924">
    <property type="term" value="F:GTPase activity"/>
    <property type="evidence" value="ECO:0007669"/>
    <property type="project" value="UniProtKB-UniRule"/>
</dbReference>
<dbReference type="GO" id="GO:0043024">
    <property type="term" value="F:ribosomal small subunit binding"/>
    <property type="evidence" value="ECO:0007669"/>
    <property type="project" value="TreeGrafter"/>
</dbReference>
<dbReference type="GO" id="GO:0019843">
    <property type="term" value="F:rRNA binding"/>
    <property type="evidence" value="ECO:0007669"/>
    <property type="project" value="TreeGrafter"/>
</dbReference>
<dbReference type="GO" id="GO:0000028">
    <property type="term" value="P:ribosomal small subunit assembly"/>
    <property type="evidence" value="ECO:0007669"/>
    <property type="project" value="TreeGrafter"/>
</dbReference>
<dbReference type="CDD" id="cd04163">
    <property type="entry name" value="Era"/>
    <property type="match status" value="1"/>
</dbReference>
<dbReference type="CDD" id="cd22534">
    <property type="entry name" value="KH-II_Era"/>
    <property type="match status" value="1"/>
</dbReference>
<dbReference type="FunFam" id="3.30.300.20:FF:000003">
    <property type="entry name" value="GTPase Era"/>
    <property type="match status" value="1"/>
</dbReference>
<dbReference type="FunFam" id="3.40.50.300:FF:000094">
    <property type="entry name" value="GTPase Era"/>
    <property type="match status" value="1"/>
</dbReference>
<dbReference type="Gene3D" id="3.30.300.20">
    <property type="match status" value="1"/>
</dbReference>
<dbReference type="Gene3D" id="3.40.50.300">
    <property type="entry name" value="P-loop containing nucleotide triphosphate hydrolases"/>
    <property type="match status" value="1"/>
</dbReference>
<dbReference type="HAMAP" id="MF_00367">
    <property type="entry name" value="GTPase_Era"/>
    <property type="match status" value="1"/>
</dbReference>
<dbReference type="InterPro" id="IPR030388">
    <property type="entry name" value="G_ERA_dom"/>
</dbReference>
<dbReference type="InterPro" id="IPR006073">
    <property type="entry name" value="GTP-bd"/>
</dbReference>
<dbReference type="InterPro" id="IPR005662">
    <property type="entry name" value="GTPase_Era-like"/>
</dbReference>
<dbReference type="InterPro" id="IPR015946">
    <property type="entry name" value="KH_dom-like_a/b"/>
</dbReference>
<dbReference type="InterPro" id="IPR004044">
    <property type="entry name" value="KH_dom_type_2"/>
</dbReference>
<dbReference type="InterPro" id="IPR009019">
    <property type="entry name" value="KH_sf_prok-type"/>
</dbReference>
<dbReference type="InterPro" id="IPR027417">
    <property type="entry name" value="P-loop_NTPase"/>
</dbReference>
<dbReference type="InterPro" id="IPR005225">
    <property type="entry name" value="Small_GTP-bd"/>
</dbReference>
<dbReference type="NCBIfam" id="TIGR00436">
    <property type="entry name" value="era"/>
    <property type="match status" value="1"/>
</dbReference>
<dbReference type="NCBIfam" id="NF000908">
    <property type="entry name" value="PRK00089.1"/>
    <property type="match status" value="1"/>
</dbReference>
<dbReference type="NCBIfam" id="TIGR00231">
    <property type="entry name" value="small_GTP"/>
    <property type="match status" value="1"/>
</dbReference>
<dbReference type="PANTHER" id="PTHR42698">
    <property type="entry name" value="GTPASE ERA"/>
    <property type="match status" value="1"/>
</dbReference>
<dbReference type="PANTHER" id="PTHR42698:SF1">
    <property type="entry name" value="GTPASE ERA, MITOCHONDRIAL"/>
    <property type="match status" value="1"/>
</dbReference>
<dbReference type="Pfam" id="PF07650">
    <property type="entry name" value="KH_2"/>
    <property type="match status" value="1"/>
</dbReference>
<dbReference type="Pfam" id="PF01926">
    <property type="entry name" value="MMR_HSR1"/>
    <property type="match status" value="1"/>
</dbReference>
<dbReference type="PRINTS" id="PR00326">
    <property type="entry name" value="GTP1OBG"/>
</dbReference>
<dbReference type="SUPFAM" id="SSF52540">
    <property type="entry name" value="P-loop containing nucleoside triphosphate hydrolases"/>
    <property type="match status" value="1"/>
</dbReference>
<dbReference type="SUPFAM" id="SSF54814">
    <property type="entry name" value="Prokaryotic type KH domain (KH-domain type II)"/>
    <property type="match status" value="1"/>
</dbReference>
<dbReference type="PROSITE" id="PS51713">
    <property type="entry name" value="G_ERA"/>
    <property type="match status" value="1"/>
</dbReference>
<dbReference type="PROSITE" id="PS50823">
    <property type="entry name" value="KH_TYPE_2"/>
    <property type="match status" value="1"/>
</dbReference>
<reference key="1">
    <citation type="journal article" date="2008" name="PLoS ONE">
        <title>Genetic basis of virulence attenuation revealed by comparative genomic analysis of Mycobacterium tuberculosis strain H37Ra versus H37Rv.</title>
        <authorList>
            <person name="Zheng H."/>
            <person name="Lu L."/>
            <person name="Wang B."/>
            <person name="Pu S."/>
            <person name="Zhang X."/>
            <person name="Zhu G."/>
            <person name="Shi W."/>
            <person name="Zhang L."/>
            <person name="Wang H."/>
            <person name="Wang S."/>
            <person name="Zhao G."/>
            <person name="Zhang Y."/>
        </authorList>
    </citation>
    <scope>NUCLEOTIDE SEQUENCE [LARGE SCALE GENOMIC DNA]</scope>
    <source>
        <strain>ATCC 25177 / H37Ra</strain>
    </source>
</reference>
<reference key="2">
    <citation type="journal article" date="2022" name="Microbiology">
        <title>Era, a GTPase-like protein of the Ras family, does not control ribosome assembly in Mycobacterium tuberculosis.</title>
        <authorList>
            <person name="Agarwal N."/>
            <person name="Sharma S."/>
            <person name="Pal P."/>
            <person name="Kaushal P.S."/>
            <person name="Kumar N."/>
        </authorList>
    </citation>
    <scope>FUNCTION</scope>
    <scope>INTERACTION WITH ENVELOPE PROTEINS</scope>
    <scope>SUBCELLULAR LOCATION</scope>
    <scope>DISRUPTION PHENOTYPE</scope>
    <source>
        <strain>ATCC 25177 / H37Ra</strain>
    </source>
</reference>
<sequence>MTEFHSGFVCLVGRPNTGKSTLTNALVGAKVAITSTRPQTTRHAIRGIVHSDDFQIILVDTPGLHRPRTLLGKRLNDLVRETYAAVDVIGLCIPADEAIGPGDRWIVEQLRSTGPANTTLVVIVTKIDKVPKEKVVAQLVAVSELVTNAAEIVPVSAMTGDRVDLLIDVLAAALPAGPAYYPDGELTDEPEEVLMAELIREAALQGVRDELPHSLAVVIDEVSPREGRDDLIDVHAALYVERDSQKGIVIGKGGARLREVGTAARSQIENLLGTKVYLDLRVKVAKNWQRDPKQLGRLGF</sequence>
<protein>
    <recommendedName>
        <fullName evidence="1 5">GTPase Era</fullName>
    </recommendedName>
</protein>
<accession>A5U557</accession>